<dbReference type="EC" id="2.4.1.-" evidence="2 4"/>
<dbReference type="EC" id="2.4.1.348" evidence="4"/>
<dbReference type="EMBL" id="AE004091">
    <property type="protein sequence ID" value="AAG08832.1"/>
    <property type="molecule type" value="Genomic_DNA"/>
</dbReference>
<dbReference type="EMBL" id="AF010183">
    <property type="protein sequence ID" value="AAC38772.1"/>
    <property type="molecule type" value="Genomic_DNA"/>
</dbReference>
<dbReference type="PIR" id="A82964">
    <property type="entry name" value="A82964"/>
</dbReference>
<dbReference type="RefSeq" id="NP_254134.1">
    <property type="nucleotide sequence ID" value="NC_002516.2"/>
</dbReference>
<dbReference type="RefSeq" id="WP_003114105.1">
    <property type="nucleotide sequence ID" value="NZ_QZGE01000012.1"/>
</dbReference>
<dbReference type="SMR" id="Q9HTC0"/>
<dbReference type="STRING" id="208964.PA5447"/>
<dbReference type="ChEMBL" id="CHEMBL2390815"/>
<dbReference type="CAZy" id="GT4">
    <property type="family name" value="Glycosyltransferase Family 4"/>
</dbReference>
<dbReference type="PaxDb" id="208964-PA5447"/>
<dbReference type="DNASU" id="878012"/>
<dbReference type="GeneID" id="878012"/>
<dbReference type="KEGG" id="pae:PA5447"/>
<dbReference type="PATRIC" id="fig|208964.12.peg.5710"/>
<dbReference type="PseudoCAP" id="PA5447"/>
<dbReference type="HOGENOM" id="CLU_009583_2_1_6"/>
<dbReference type="InParanoid" id="Q9HTC0"/>
<dbReference type="OrthoDB" id="9802525at2"/>
<dbReference type="PhylomeDB" id="Q9HTC0"/>
<dbReference type="BioCyc" id="PAER208964:G1FZ6-5575-MONOMER"/>
<dbReference type="UniPathway" id="UPA00301"/>
<dbReference type="PRO" id="PR:Q9HTC0"/>
<dbReference type="Proteomes" id="UP000002438">
    <property type="component" value="Chromosome"/>
</dbReference>
<dbReference type="GO" id="GO:0005737">
    <property type="term" value="C:cytoplasm"/>
    <property type="evidence" value="ECO:0000314"/>
    <property type="project" value="UniProtKB"/>
</dbReference>
<dbReference type="GO" id="GO:0016757">
    <property type="term" value="F:glycosyltransferase activity"/>
    <property type="evidence" value="ECO:0000269"/>
    <property type="project" value="PseudoCAP"/>
</dbReference>
<dbReference type="GO" id="GO:0016758">
    <property type="term" value="F:hexosyltransferase activity"/>
    <property type="evidence" value="ECO:0000314"/>
    <property type="project" value="UniProtKB"/>
</dbReference>
<dbReference type="GO" id="GO:0000030">
    <property type="term" value="F:mannosyltransferase activity"/>
    <property type="evidence" value="ECO:0000314"/>
    <property type="project" value="UniProtKB"/>
</dbReference>
<dbReference type="GO" id="GO:0033296">
    <property type="term" value="F:rhamnose binding"/>
    <property type="evidence" value="ECO:0000269"/>
    <property type="project" value="PseudoCAP"/>
</dbReference>
<dbReference type="GO" id="GO:0071236">
    <property type="term" value="P:cellular response to antibiotic"/>
    <property type="evidence" value="ECO:0000315"/>
    <property type="project" value="UniProtKB"/>
</dbReference>
<dbReference type="GO" id="GO:0009103">
    <property type="term" value="P:lipopolysaccharide biosynthetic process"/>
    <property type="evidence" value="ECO:0000315"/>
    <property type="project" value="UniProtKB"/>
</dbReference>
<dbReference type="GO" id="GO:0097502">
    <property type="term" value="P:mannosylation"/>
    <property type="evidence" value="ECO:0000314"/>
    <property type="project" value="UniProtKB"/>
</dbReference>
<dbReference type="GO" id="GO:0009243">
    <property type="term" value="P:O antigen biosynthetic process"/>
    <property type="evidence" value="ECO:0000314"/>
    <property type="project" value="PseudoCAP"/>
</dbReference>
<dbReference type="CDD" id="cd03795">
    <property type="entry name" value="GT4_WfcD-like"/>
    <property type="match status" value="1"/>
</dbReference>
<dbReference type="Gene3D" id="3.40.50.2000">
    <property type="entry name" value="Glycogen Phosphorylase B"/>
    <property type="match status" value="2"/>
</dbReference>
<dbReference type="InterPro" id="IPR001296">
    <property type="entry name" value="Glyco_trans_1"/>
</dbReference>
<dbReference type="InterPro" id="IPR028098">
    <property type="entry name" value="Glyco_trans_4-like_N"/>
</dbReference>
<dbReference type="PANTHER" id="PTHR12526:SF627">
    <property type="entry name" value="D-RHAMNOSYLTRANSFERASE WBPZ"/>
    <property type="match status" value="1"/>
</dbReference>
<dbReference type="PANTHER" id="PTHR12526">
    <property type="entry name" value="GLYCOSYLTRANSFERASE"/>
    <property type="match status" value="1"/>
</dbReference>
<dbReference type="Pfam" id="PF13439">
    <property type="entry name" value="Glyco_transf_4"/>
    <property type="match status" value="1"/>
</dbReference>
<dbReference type="Pfam" id="PF00534">
    <property type="entry name" value="Glycos_transf_1"/>
    <property type="match status" value="1"/>
</dbReference>
<dbReference type="SUPFAM" id="SSF53756">
    <property type="entry name" value="UDP-Glycosyltransferase/glycogen phosphorylase"/>
    <property type="match status" value="1"/>
</dbReference>
<accession>Q9HTC0</accession>
<accession>O84910</accession>
<comment type="function">
    <text evidence="2 3 4 5">Non-processive alpha-1,3-D-rhamnosyltransferase (PubMed:23664878, PubMed:25845842). Catalyzes the transfer of one D-rhamnose (D-Rha) residue from donor substrate GDP-D-Rha in alpha-1-3 linkage to both GlcNAc- and GalNAc-diphosphate-lipid acceptor substrates. Is also able to transfer D-mannose (D-Man) to these acceptors at a lower level. Nucleotide sugars GDP-D-Rha, GDP-Fuc, UDP-Gal, UDP-GalNAc, UDP-GlcNAc and CMP-sialic acid cannot act as donor substrates. Only compounds with a diphosphate as the aglycone group can act as acceptor substrates. No activity is detected with compounds containing a diphosphate mimic. Fluorescent undecyl-anthracenyl group-containing compounds, such as GlcNAc-PO(3)-PO(3)-AnthrU and GalNAc-PO(3)-PO(3)-AnthrU, are also good acceptor substrates (PubMed:25845842). Involved in the biosynthesis of the common polysaccharide antigen (CPA), also called A band, which is one of the two major cell surface O-antigens of the P.aeruginosa lipopolysaccharide (PubMed:23664878, PubMed:25845842, PubMed:9680202). Involved in susceptibility to antibiotic colistin (PubMed:24474431).</text>
</comment>
<comment type="catalytic activity">
    <reaction evidence="4">
        <text>GDP-alpha-D-rhamnose + N-acetyl-alpha-D-glucosaminyl-di-trans,octa-cis-undecaprenyl diphosphate = alpha-D-rhamnosyl-(1-&gt;3)-N-acetyl-alpha-D-glucosaminyl-1-diphospho-di-trans,octa-cis-undecaprenol + GDP + H(+)</text>
        <dbReference type="Rhea" id="RHEA:66500"/>
        <dbReference type="ChEBI" id="CHEBI:15378"/>
        <dbReference type="ChEBI" id="CHEBI:58189"/>
        <dbReference type="ChEBI" id="CHEBI:58224"/>
        <dbReference type="ChEBI" id="CHEBI:62959"/>
        <dbReference type="ChEBI" id="CHEBI:167141"/>
    </reaction>
</comment>
<comment type="catalytic activity">
    <reaction evidence="4">
        <text>GDP-alpha-D-rhamnose + N-acetyl-alpha-D-galactosaminyl-di-trans,octa-cis-undecaprenyl diphosphate = alpha-D-rhamnosyl-(1-&gt;3)-N-acetyl-alpha-D-galactosaminyl-1-diphospho-di-trans,octa-cis-undecaprenol + GDP + H(+)</text>
        <dbReference type="Rhea" id="RHEA:66496"/>
        <dbReference type="ChEBI" id="CHEBI:15378"/>
        <dbReference type="ChEBI" id="CHEBI:58189"/>
        <dbReference type="ChEBI" id="CHEBI:58224"/>
        <dbReference type="ChEBI" id="CHEBI:74214"/>
        <dbReference type="ChEBI" id="CHEBI:167142"/>
    </reaction>
</comment>
<comment type="catalytic activity">
    <reaction evidence="4">
        <text>N-acetyl-alpha-D-glucosaminyl-di-trans,octa-cis-undecaprenyl diphosphate + GDP-alpha-D-mannose = alpha-D-mannosyl-(1-&gt;3)-N-acetyl-alpha-D-glucosaminyl-di-trans,octa-cis-undecaprenyl diphosphate + GDP + H(+)</text>
        <dbReference type="Rhea" id="RHEA:53316"/>
        <dbReference type="ChEBI" id="CHEBI:15378"/>
        <dbReference type="ChEBI" id="CHEBI:57527"/>
        <dbReference type="ChEBI" id="CHEBI:58189"/>
        <dbReference type="ChEBI" id="CHEBI:62959"/>
        <dbReference type="ChEBI" id="CHEBI:137168"/>
        <dbReference type="EC" id="2.4.1.348"/>
    </reaction>
</comment>
<comment type="catalytic activity">
    <reaction evidence="4">
        <text>N-acetyl-alpha-D-galactosaminyl-di-trans,octa-cis-undecaprenyl diphosphate + GDP-alpha-D-mannose = alpha-D-mannosyl-(1-&gt;3)-N-acetyl-alpha-D-galctosaminyl-1-diphospho-di-trans,octa-cis-undecaprenol + GDP + H(+)</text>
        <dbReference type="Rhea" id="RHEA:66492"/>
        <dbReference type="ChEBI" id="CHEBI:15378"/>
        <dbReference type="ChEBI" id="CHEBI:57527"/>
        <dbReference type="ChEBI" id="CHEBI:58189"/>
        <dbReference type="ChEBI" id="CHEBI:74214"/>
        <dbReference type="ChEBI" id="CHEBI:167140"/>
    </reaction>
</comment>
<comment type="activity regulation">
    <text evidence="2 4">Not activated by dithiothreitol (DTT) using GlcNAc-alpha-PO(3)-PO(3)-phenylundecyl (GlcNAc-PP-PhU) as acceptor substrate (PubMed:23664878, PubMed:25845842). 0.25% Triton X-100 and 0.125% NP-40 increases the activity 2.5-fold and 2-fold, respectively. 0.125% octyl glucoside has little effect on activity. Slightly increased activity with Mg(2+) and Pb(2+), while no effect with Mn(2+), Co(2+), Ni(2+), Cu(2+), Zn(2+), Ca(2+) or EDTA. Not inhibited by N-butyryl-galactosamine-alpha-benzyl or N-butyryl-glucosamine-beta-benzyl. Bis-imidazolium salts having aliphatic spacer groups with 4 or 6 carbons have little effect on activity, but spacer groups of 18-22 aliphatic carbons inhibit activity, with the most potent inhibitor being bis-imidazolium salt having a 20-carbon chain spacer length (PubMed:25845842).</text>
</comment>
<comment type="biophysicochemical properties">
    <kinetics>
        <KM evidence="4">0.45 mM for GDP-D-Rha</KM>
        <KM evidence="4">0.1 mM for GalNAc-alpha-PO(3)-PO(3)-phenylundecyl (GalNAc-PP-PhU)</KM>
        <Vmax evidence="4">14.0 nmol/h/mg enzyme with GDP-D-Rha as substrate</Vmax>
        <Vmax evidence="4">12.0 nmol/h/mg enzyme with GalNAc-alpha-PO(3)-PO(3)-phenylundecyl (GalNAc-PP-PhU) as substrate</Vmax>
    </kinetics>
    <phDependence>
        <text evidence="4">Optimum pH is 9.</text>
    </phDependence>
</comment>
<comment type="pathway">
    <text evidence="11 12">Lipopolysaccharide biosynthesis; LPS oligosaccharide biosynthesis.</text>
</comment>
<comment type="subcellular location">
    <subcellularLocation>
        <location evidence="11">Cytoplasm</location>
    </subcellularLocation>
</comment>
<comment type="induction">
    <text evidence="3">Expression is up-regulated in colistin-resistant clinical isolates (GKK-1 and GKK-3) compared to colistin-susceptible clinical isolate (GKK-2).</text>
</comment>
<comment type="disruption phenotype">
    <text evidence="3 4 5">Lack of common polysaccharide antigen (CPA) biosynthesis (PubMed:25845842, PubMed:9680202). Biosynthesis of O-specific antigen (OSA), also called B band, is unaffected (PubMed:9680202). Increased susceptibility to the antibiotic colistin (PubMed:24474431).</text>
</comment>
<comment type="biotechnology">
    <text evidence="12">Potential target of antibacterial drug development.</text>
</comment>
<comment type="similarity">
    <text evidence="10">Belongs to the glycosyltransferase group 1 family. Glycosyltransferase 4 subfamily.</text>
</comment>
<organism evidence="14">
    <name type="scientific">Pseudomonas aeruginosa (strain ATCC 15692 / DSM 22644 / CIP 104116 / JCM 14847 / LMG 12228 / 1C / PRS 101 / PAO1)</name>
    <dbReference type="NCBI Taxonomy" id="208964"/>
    <lineage>
        <taxon>Bacteria</taxon>
        <taxon>Pseudomonadati</taxon>
        <taxon>Pseudomonadota</taxon>
        <taxon>Gammaproteobacteria</taxon>
        <taxon>Pseudomonadales</taxon>
        <taxon>Pseudomonadaceae</taxon>
        <taxon>Pseudomonas</taxon>
    </lineage>
</organism>
<sequence>MRVLHFYKTYLSETVGGIEQVIFQLCESSGSWGIDNHVLTLSSDPHPPVVPFGGHVVHRARLDLQLASTGFSLSVFKQFRELAAEADVVNYHFPWPFMDLVHFLTGMNKPSVVTYHSDIIRQRVLLKLYRPLMSRFLHSVDRIVAASPNYFSTSDVLRQYREKTRVITYGLDKDGYPKPATQRLEHWREKLGPRFFLFVGVMRYYKGLHILLDALQGTDYPVVIVGAGPLQAELYAQAAALGLRNVHFLGRVDDEDKVALLQLSYAMVFPSHLRSEAFGISLLEGAMYGKPMISSEIGTGTSYINIHGETGLVVPPSQPAAFRQAMRWLWEHPQQAEEMGRNAEARYRQLFTAEEMGRRWSELYRELLEEKASSRYVKAAR</sequence>
<name>WBPZ_PSEAE</name>
<protein>
    <recommendedName>
        <fullName evidence="6 8 9">D-rhamnosyltransferase WbpZ</fullName>
        <ecNumber evidence="2 4">2.4.1.-</ecNumber>
    </recommendedName>
    <alternativeName>
        <fullName evidence="8">GDP-D-Man:GlcNAc-diphosphate-lipid alpha-1,3-D-mannosyltransferase</fullName>
        <ecNumber evidence="4">2.4.1.348</ecNumber>
    </alternativeName>
    <alternativeName>
        <fullName evidence="8">GDP-D-Man:GlcNAc/GalNAc-diphosphate-lipid alpha-1,3-D-mannosyltransferase</fullName>
    </alternativeName>
    <alternativeName>
        <fullName evidence="8">GDP-D-rhamnose:GlcNAc/GalNAc-diphosphate-lipid alpha-1,3-D-rhamnosyltransferase</fullName>
    </alternativeName>
</protein>
<proteinExistence type="evidence at protein level"/>
<evidence type="ECO:0000250" key="1">
    <source>
        <dbReference type="UniProtKB" id="Q0P9C5"/>
    </source>
</evidence>
<evidence type="ECO:0000269" key="2">
    <source>
    </source>
</evidence>
<evidence type="ECO:0000269" key="3">
    <source>
    </source>
</evidence>
<evidence type="ECO:0000269" key="4">
    <source>
    </source>
</evidence>
<evidence type="ECO:0000269" key="5">
    <source>
    </source>
</evidence>
<evidence type="ECO:0000303" key="6">
    <source>
    </source>
</evidence>
<evidence type="ECO:0000303" key="7">
    <source>
    </source>
</evidence>
<evidence type="ECO:0000303" key="8">
    <source>
    </source>
</evidence>
<evidence type="ECO:0000303" key="9">
    <source>
    </source>
</evidence>
<evidence type="ECO:0000305" key="10"/>
<evidence type="ECO:0000305" key="11">
    <source>
    </source>
</evidence>
<evidence type="ECO:0000305" key="12">
    <source>
    </source>
</evidence>
<evidence type="ECO:0000312" key="13">
    <source>
        <dbReference type="EMBL" id="AAC38772.1"/>
    </source>
</evidence>
<evidence type="ECO:0000312" key="14">
    <source>
        <dbReference type="EMBL" id="AAG08832.1"/>
    </source>
</evidence>
<evidence type="ECO:0000312" key="15">
    <source>
        <dbReference type="Proteomes" id="UP000002438"/>
    </source>
</evidence>
<keyword id="KW-0046">Antibiotic resistance</keyword>
<keyword id="KW-0963">Cytoplasm</keyword>
<keyword id="KW-0328">Glycosyltransferase</keyword>
<keyword id="KW-0448">Lipopolysaccharide biosynthesis</keyword>
<keyword id="KW-1185">Reference proteome</keyword>
<keyword id="KW-0808">Transferase</keyword>
<reference evidence="14 15" key="1">
    <citation type="journal article" date="2000" name="Nature">
        <title>Complete genome sequence of Pseudomonas aeruginosa PAO1, an opportunistic pathogen.</title>
        <authorList>
            <person name="Stover C.K."/>
            <person name="Pham X.-Q.T."/>
            <person name="Erwin A.L."/>
            <person name="Mizoguchi S.D."/>
            <person name="Warrener P."/>
            <person name="Hickey M.J."/>
            <person name="Brinkman F.S.L."/>
            <person name="Hufnagle W.O."/>
            <person name="Kowalik D.J."/>
            <person name="Lagrou M."/>
            <person name="Garber R.L."/>
            <person name="Goltry L."/>
            <person name="Tolentino E."/>
            <person name="Westbrock-Wadman S."/>
            <person name="Yuan Y."/>
            <person name="Brody L.L."/>
            <person name="Coulter S.N."/>
            <person name="Folger K.R."/>
            <person name="Kas A."/>
            <person name="Larbig K."/>
            <person name="Lim R.M."/>
            <person name="Smith K.A."/>
            <person name="Spencer D.H."/>
            <person name="Wong G.K.-S."/>
            <person name="Wu Z."/>
            <person name="Paulsen I.T."/>
            <person name="Reizer J."/>
            <person name="Saier M.H. Jr."/>
            <person name="Hancock R.E.W."/>
            <person name="Lory S."/>
            <person name="Olson M.V."/>
        </authorList>
    </citation>
    <scope>NUCLEOTIDE SEQUENCE [LARGE SCALE GENOMIC DNA]</scope>
    <source>
        <strain evidence="15">ATCC 15692 / DSM 22644 / CIP 104116 / JCM 14847 / LMG 12228 / 1C / PRS 101 / PAO1</strain>
    </source>
</reference>
<reference evidence="13" key="2">
    <citation type="journal article" date="1998" name="Mol. Microbiol.">
        <title>Three rhamnosyltransferases responsible for assembly of the A-band D-rhamnan polysaccharide in Pseudomonas aeruginosa: a fourth transferase, WbpL, is required for the initiation of both A-band and B-band lipopolysaccharide synthesis.</title>
        <authorList>
            <person name="Rocchetta H.L."/>
            <person name="Burrows L.L."/>
            <person name="Pacan J.C."/>
            <person name="Lam J.S."/>
        </authorList>
    </citation>
    <scope>NUCLEOTIDE SEQUENCE [GENOMIC DNA]</scope>
    <scope>FUNCTION</scope>
    <scope>DISRUPTION PHENOTYPE</scope>
    <source>
        <strain evidence="9">ATCC 15692 / DSM 22644 / CIP 104116 / JCM 14847 / LMG 12228 / 1C / PRS 101 / PAO1</strain>
    </source>
</reference>
<reference key="3">
    <citation type="journal article" date="2013" name="Bioorg. Med. Chem. Lett.">
        <title>A convenient synthesis of GDP-D-rhamnose: the donor substrate for D-rhamnosyltransferase WbpZ from Pseudomonas aeruginosa PAO1.</title>
        <authorList>
            <person name="Wang S."/>
            <person name="Tanaka H."/>
            <person name="Hindsgaul O."/>
            <person name="Lam J.S."/>
            <person name="Brockhausen I."/>
        </authorList>
    </citation>
    <scope>FUNCTION</scope>
    <scope>CATALYTIC ACTIVITY</scope>
    <scope>ACTIVITY REGULATION</scope>
    <scope>PATHWAY</scope>
    <scope>SUBCELLULAR LOCATION</scope>
    <source>
        <strain evidence="6">ATCC 15692 / DSM 22644 / CIP 104116 / JCM 14847 / LMG 12228 / 1C / PRS 101 / PAO1</strain>
    </source>
</reference>
<reference key="4">
    <citation type="journal article" date="2014" name="J. Antimicrob. Chemother.">
        <title>Genomic variations between colistin-susceptible and -resistant Pseudomonas aeruginosa clinical isolates and their effects on colistin resistance.</title>
        <authorList>
            <person name="Lee J.Y."/>
            <person name="Na I.Y."/>
            <person name="Park Y.K."/>
            <person name="Ko K.S."/>
        </authorList>
    </citation>
    <scope>FUNCTION</scope>
    <scope>INDUCTION</scope>
    <scope>DISRUPTION PHENOTYPE</scope>
    <scope>VARIANT THR-259</scope>
    <source>
        <strain>Clinical isolate GKK-1</strain>
        <strain>Clinical isolate GKK-2</strain>
        <strain evidence="7">Clinical isolate GKK-3</strain>
    </source>
</reference>
<reference key="5">
    <citation type="journal article" date="2015" name="J. Bacteriol.">
        <title>Biosynthesis of the Common Polysaccharide Antigen of Pseudomonas aeruginosa PAO1: Characterization and Role of GDP-D-Rhamnose:GlcNAc/GalNAc-Diphosphate-Lipid alpha1,3-D-Rhamnosyltransferase WbpZ.</title>
        <authorList>
            <person name="Wang S."/>
            <person name="Hao Y."/>
            <person name="Lam J.S."/>
            <person name="Vlahakis J.Z."/>
            <person name="Szarek W.A."/>
            <person name="Vinnikova A."/>
            <person name="Veselovsky V.V."/>
            <person name="Brockhausen I."/>
        </authorList>
    </citation>
    <scope>FUNCTION</scope>
    <scope>SUBSTRATE SPECIFICITY</scope>
    <scope>CATALYTIC ACTIVITY</scope>
    <scope>ACTIVITY REGULATION</scope>
    <scope>BIOPHYSICOCHEMICAL PROPERTIES</scope>
    <scope>PATHWAY</scope>
    <scope>DISRUPTION PHENOTYPE</scope>
    <scope>BIOTECHNOLOGY</scope>
    <scope>MUTAGENESIS OF CYS-26; ASP-172; ASP-174; ASP-253; ASP-254 AND ASP-256</scope>
    <source>
        <strain evidence="8">ATCC 15692 / DSM 22644 / CIP 104116 / JCM 14847 / LMG 12228 / 1C / PRS 101 / PAO1</strain>
    </source>
</reference>
<feature type="chain" id="PRO_0000452366" description="D-rhamnosyltransferase WbpZ">
    <location>
        <begin position="1"/>
        <end position="381"/>
    </location>
</feature>
<feature type="binding site" evidence="1">
    <location>
        <position position="19"/>
    </location>
    <ligand>
        <name>substrate</name>
    </ligand>
</feature>
<feature type="binding site" evidence="1">
    <location>
        <position position="116"/>
    </location>
    <ligand>
        <name>substrate</name>
    </ligand>
</feature>
<feature type="binding site" evidence="1">
    <location>
        <position position="206"/>
    </location>
    <ligand>
        <name>substrate</name>
    </ligand>
</feature>
<feature type="binding site" evidence="1">
    <location>
        <position position="252"/>
    </location>
    <ligand>
        <name>substrate</name>
    </ligand>
</feature>
<feature type="sequence variant" description="In clinical isolates: GKK-1 and GKK-3; colistin-resistant." evidence="3">
    <original>A</original>
    <variation>T</variation>
    <location>
        <position position="259"/>
    </location>
</feature>
<feature type="mutagenesis site" description="No effect on enzyme activity. Rescues the common polysaccharide antigen (CPA) biosynthesis to the wild-type level in cells having knockout of this gene." evidence="4">
    <original>C</original>
    <variation>A</variation>
    <location>
        <position position="26"/>
    </location>
</feature>
<feature type="mutagenesis site" description="Residual catalytic activity using GDP-D-Rha as a donor and GlcNAc-alpha-PO(3)-PO(3)-phenylundecyl (GlcNAc-PP-PhU) or GalNAc-PP-PhU as acceptor substrate. Cannot rescue the common polysaccharide antigen (CPA) biosynthesis in cells having a knockout of this gene." evidence="4">
    <original>D</original>
    <variation>A</variation>
    <location>
        <position position="172"/>
    </location>
</feature>
<feature type="mutagenesis site" description="No effect on catalytic activity using GDP-D-Rha as a donor and GlcNAc-alpha-PO(3)-PO(3)-phenylundecyl (GlcNAc-PP-PhU) or GalNAc-PP-PhU as acceptor substrate. Rescues the common polysaccharide antigen (CPA) biosynthesis to the wild-type level in cells having a knockout of this gene." evidence="4">
    <original>D</original>
    <variation>A</variation>
    <location>
        <position position="174"/>
    </location>
</feature>
<feature type="mutagenesis site" description="No effect on catalytic activity using GDP-D-Rha as a donor and GlcNAc-alpha-PO(3)-PO(3)-phenylundecyl (GlcNAc-PP-PhU) or GalNAc-PP-PhU as acceptor substrate. Rescues the common polysaccharide antigen (CPA) biosynthesis to the wild-type level in cells having a knockout of this gene." evidence="4">
    <original>D</original>
    <variation>A</variation>
    <location>
        <position position="253"/>
    </location>
</feature>
<feature type="mutagenesis site" description="Residual catalytic activity using GDP-D-Rha as a donor and GlcNAc-alpha-PO(3)-PO(3)-phenylundecyl (GlcNAc-PP-PhU) or GalNAc-PP-PhU as acceptor substrate. Cannot rescue the common polysaccharide antigen (CPA) biosynthesis in cells having a knockout of this gene." evidence="4">
    <original>D</original>
    <variation>A</variation>
    <location>
        <position position="254"/>
    </location>
</feature>
<feature type="mutagenesis site" description="15% catalytic activity of the wild-type using GDP-D-Rha as a donor and GlcNAc-alpha-PO(3)-PO(3)-phenylundecyl (GlcNAc-PP-PhU) or GalNAc-PP-PhU as acceptor substrate. Rescues the common polysaccharide antigen (CPA) biosynthesis to the wild-type level in cells having a knockout of this gene." evidence="4">
    <original>D</original>
    <variation>A</variation>
    <location>
        <position position="256"/>
    </location>
</feature>
<feature type="sequence conflict" description="In Ref. 2; AAC38772." evidence="10" ref="2">
    <original>V</original>
    <variation>F</variation>
    <location>
        <position position="38"/>
    </location>
</feature>
<feature type="sequence conflict" description="In Ref. 2; AAC38772." evidence="10" ref="2">
    <original>A</original>
    <variation>T</variation>
    <location>
        <position position="238"/>
    </location>
</feature>
<gene>
    <name evidence="6 7 8 9 13 14" type="primary">wbpZ</name>
    <name evidence="7 14" type="ordered locus">PA5447</name>
</gene>